<geneLocation type="plasmid">
    <name>pSymA</name>
    <name>megaplasmid 1</name>
</geneLocation>
<feature type="chain" id="PRO_0000052442" description="Flavohemoprotein">
    <location>
        <begin position="1"/>
        <end position="403"/>
    </location>
</feature>
<feature type="domain" description="Globin" evidence="2">
    <location>
        <begin position="1"/>
        <end position="138"/>
    </location>
</feature>
<feature type="domain" description="FAD-binding FR-type" evidence="1">
    <location>
        <begin position="152"/>
        <end position="262"/>
    </location>
</feature>
<feature type="region of interest" description="Reductase">
    <location>
        <begin position="149"/>
        <end position="403"/>
    </location>
</feature>
<feature type="active site" description="Charge relay system" evidence="1">
    <location>
        <position position="95"/>
    </location>
</feature>
<feature type="active site" description="Charge relay system" evidence="1">
    <location>
        <position position="137"/>
    </location>
</feature>
<feature type="binding site" description="proximal binding residue" evidence="1">
    <location>
        <position position="85"/>
    </location>
    <ligand>
        <name>heme b</name>
        <dbReference type="ChEBI" id="CHEBI:60344"/>
    </ligand>
    <ligandPart>
        <name>Fe</name>
        <dbReference type="ChEBI" id="CHEBI:18248"/>
    </ligandPart>
</feature>
<feature type="binding site" evidence="1">
    <location>
        <position position="190"/>
    </location>
    <ligand>
        <name>FAD</name>
        <dbReference type="ChEBI" id="CHEBI:57692"/>
    </ligand>
</feature>
<feature type="binding site" evidence="1">
    <location>
        <begin position="206"/>
        <end position="209"/>
    </location>
    <ligand>
        <name>FAD</name>
        <dbReference type="ChEBI" id="CHEBI:57692"/>
    </ligand>
</feature>
<feature type="binding site" evidence="1">
    <location>
        <begin position="275"/>
        <end position="280"/>
    </location>
    <ligand>
        <name>NADP(+)</name>
        <dbReference type="ChEBI" id="CHEBI:58349"/>
    </ligand>
</feature>
<feature type="binding site" evidence="1">
    <location>
        <begin position="395"/>
        <end position="398"/>
    </location>
    <ligand>
        <name>FAD</name>
        <dbReference type="ChEBI" id="CHEBI:57692"/>
    </ligand>
</feature>
<feature type="site" description="Involved in heme-bound ligand stabilization and O-O bond activation" evidence="1">
    <location>
        <position position="29"/>
    </location>
</feature>
<feature type="site" description="Influences the redox potential of the prosthetic heme and FAD groups" evidence="1">
    <location>
        <position position="84"/>
    </location>
</feature>
<feature type="site" description="Influences the redox potential of the prosthetic heme and FAD groups" evidence="1">
    <location>
        <position position="394"/>
    </location>
</feature>
<feature type="sequence conflict" description="In Ref. 1; AAP93662." evidence="3" ref="1">
    <original>N</original>
    <variation>D</variation>
    <location>
        <position position="41"/>
    </location>
</feature>
<feature type="sequence conflict" description="In Ref. 1; AAP93662." evidence="3" ref="1">
    <original>L</original>
    <variation>I</variation>
    <location>
        <position position="88"/>
    </location>
</feature>
<feature type="sequence conflict" description="In Ref. 1; AAP93662." evidence="3" ref="1">
    <original>E</original>
    <variation>G</variation>
    <location>
        <position position="142"/>
    </location>
</feature>
<feature type="sequence conflict" description="In Ref. 1; AAP93662." evidence="3" ref="1">
    <original>L</original>
    <variation>P</variation>
    <location>
        <position position="250"/>
    </location>
</feature>
<feature type="sequence conflict" description="In Ref. 1; AAP93662." evidence="3" ref="1">
    <original>K</original>
    <variation>N</variation>
    <location>
        <position position="353"/>
    </location>
</feature>
<protein>
    <recommendedName>
        <fullName evidence="1">Flavohemoprotein</fullName>
    </recommendedName>
    <alternativeName>
        <fullName evidence="1">Flavohemoglobin</fullName>
    </alternativeName>
    <alternativeName>
        <fullName evidence="1">Hemoglobin-like protein</fullName>
    </alternativeName>
    <alternativeName>
        <fullName evidence="1">Nitric oxide dioxygenase</fullName>
        <shortName evidence="1">NO oxygenase</shortName>
        <shortName evidence="1">NOD</shortName>
        <ecNumber evidence="1">1.14.12.17</ecNumber>
    </alternativeName>
</protein>
<reference key="1">
    <citation type="journal article" date="2003" name="Microbiol. Res.">
        <title>In silico analysis of a flavohemoglobin from Sinorhizobium meliloti strain 1021.</title>
        <authorList>
            <person name="Lira-Ruan V."/>
            <person name="Sarath G."/>
            <person name="Klucas R.V."/>
            <person name="Arredondo-Peter R."/>
        </authorList>
    </citation>
    <scope>NUCLEOTIDE SEQUENCE [GENOMIC DNA]</scope>
    <source>
        <strain>1021</strain>
    </source>
</reference>
<reference key="2">
    <citation type="journal article" date="2001" name="Proc. Natl. Acad. Sci. U.S.A.">
        <title>Nucleotide sequence and predicted functions of the entire Sinorhizobium meliloti pSymA megaplasmid.</title>
        <authorList>
            <person name="Barnett M.J."/>
            <person name="Fisher R.F."/>
            <person name="Jones T."/>
            <person name="Komp C."/>
            <person name="Abola A.P."/>
            <person name="Barloy-Hubler F."/>
            <person name="Bowser L."/>
            <person name="Capela D."/>
            <person name="Galibert F."/>
            <person name="Gouzy J."/>
            <person name="Gurjal M."/>
            <person name="Hong A."/>
            <person name="Huizar L."/>
            <person name="Hyman R.W."/>
            <person name="Kahn D."/>
            <person name="Kahn M.L."/>
            <person name="Kalman S."/>
            <person name="Keating D.H."/>
            <person name="Palm C."/>
            <person name="Peck M.C."/>
            <person name="Surzycki R."/>
            <person name="Wells D.H."/>
            <person name="Yeh K.-C."/>
            <person name="Davis R.W."/>
            <person name="Federspiel N.A."/>
            <person name="Long S.R."/>
        </authorList>
    </citation>
    <scope>NUCLEOTIDE SEQUENCE [LARGE SCALE GENOMIC DNA]</scope>
    <source>
        <strain>1021</strain>
    </source>
</reference>
<reference key="3">
    <citation type="journal article" date="2001" name="Science">
        <title>The composite genome of the legume symbiont Sinorhizobium meliloti.</title>
        <authorList>
            <person name="Galibert F."/>
            <person name="Finan T.M."/>
            <person name="Long S.R."/>
            <person name="Puehler A."/>
            <person name="Abola P."/>
            <person name="Ampe F."/>
            <person name="Barloy-Hubler F."/>
            <person name="Barnett M.J."/>
            <person name="Becker A."/>
            <person name="Boistard P."/>
            <person name="Bothe G."/>
            <person name="Boutry M."/>
            <person name="Bowser L."/>
            <person name="Buhrmester J."/>
            <person name="Cadieu E."/>
            <person name="Capela D."/>
            <person name="Chain P."/>
            <person name="Cowie A."/>
            <person name="Davis R.W."/>
            <person name="Dreano S."/>
            <person name="Federspiel N.A."/>
            <person name="Fisher R.F."/>
            <person name="Gloux S."/>
            <person name="Godrie T."/>
            <person name="Goffeau A."/>
            <person name="Golding B."/>
            <person name="Gouzy J."/>
            <person name="Gurjal M."/>
            <person name="Hernandez-Lucas I."/>
            <person name="Hong A."/>
            <person name="Huizar L."/>
            <person name="Hyman R.W."/>
            <person name="Jones T."/>
            <person name="Kahn D."/>
            <person name="Kahn M.L."/>
            <person name="Kalman S."/>
            <person name="Keating D.H."/>
            <person name="Kiss E."/>
            <person name="Komp C."/>
            <person name="Lelaure V."/>
            <person name="Masuy D."/>
            <person name="Palm C."/>
            <person name="Peck M.C."/>
            <person name="Pohl T.M."/>
            <person name="Portetelle D."/>
            <person name="Purnelle B."/>
            <person name="Ramsperger U."/>
            <person name="Surzycki R."/>
            <person name="Thebault P."/>
            <person name="Vandenbol M."/>
            <person name="Vorhoelter F.J."/>
            <person name="Weidner S."/>
            <person name="Wells D.H."/>
            <person name="Wong K."/>
            <person name="Yeh K.-C."/>
            <person name="Batut J."/>
        </authorList>
    </citation>
    <scope>NUCLEOTIDE SEQUENCE [LARGE SCALE GENOMIC DNA]</scope>
    <source>
        <strain>1021</strain>
    </source>
</reference>
<keyword id="KW-0216">Detoxification</keyword>
<keyword id="KW-0274">FAD</keyword>
<keyword id="KW-0285">Flavoprotein</keyword>
<keyword id="KW-0349">Heme</keyword>
<keyword id="KW-0408">Iron</keyword>
<keyword id="KW-0479">Metal-binding</keyword>
<keyword id="KW-0520">NAD</keyword>
<keyword id="KW-0521">NADP</keyword>
<keyword id="KW-0560">Oxidoreductase</keyword>
<keyword id="KW-0561">Oxygen transport</keyword>
<keyword id="KW-0614">Plasmid</keyword>
<keyword id="KW-1185">Reference proteome</keyword>
<keyword id="KW-0813">Transport</keyword>
<proteinExistence type="inferred from homology"/>
<organism>
    <name type="scientific">Rhizobium meliloti (strain 1021)</name>
    <name type="common">Ensifer meliloti</name>
    <name type="synonym">Sinorhizobium meliloti</name>
    <dbReference type="NCBI Taxonomy" id="266834"/>
    <lineage>
        <taxon>Bacteria</taxon>
        <taxon>Pseudomonadati</taxon>
        <taxon>Pseudomonadota</taxon>
        <taxon>Alphaproteobacteria</taxon>
        <taxon>Hyphomicrobiales</taxon>
        <taxon>Rhizobiaceae</taxon>
        <taxon>Sinorhizobium/Ensifer group</taxon>
        <taxon>Sinorhizobium</taxon>
    </lineage>
</organism>
<comment type="function">
    <text evidence="1">Is involved in NO detoxification in an aerobic process, termed nitric oxide dioxygenase (NOD) reaction that utilizes O(2) and NAD(P)H to convert NO to nitrate, which protects the bacterium from various noxious nitrogen compounds. Therefore, plays a central role in the inducible response to nitrosative stress.</text>
</comment>
<comment type="catalytic activity">
    <reaction evidence="1">
        <text>2 nitric oxide + NADPH + 2 O2 = 2 nitrate + NADP(+) + H(+)</text>
        <dbReference type="Rhea" id="RHEA:19465"/>
        <dbReference type="ChEBI" id="CHEBI:15378"/>
        <dbReference type="ChEBI" id="CHEBI:15379"/>
        <dbReference type="ChEBI" id="CHEBI:16480"/>
        <dbReference type="ChEBI" id="CHEBI:17632"/>
        <dbReference type="ChEBI" id="CHEBI:57783"/>
        <dbReference type="ChEBI" id="CHEBI:58349"/>
        <dbReference type="EC" id="1.14.12.17"/>
    </reaction>
</comment>
<comment type="catalytic activity">
    <reaction evidence="1">
        <text>2 nitric oxide + NADH + 2 O2 = 2 nitrate + NAD(+) + H(+)</text>
        <dbReference type="Rhea" id="RHEA:19469"/>
        <dbReference type="ChEBI" id="CHEBI:15378"/>
        <dbReference type="ChEBI" id="CHEBI:15379"/>
        <dbReference type="ChEBI" id="CHEBI:16480"/>
        <dbReference type="ChEBI" id="CHEBI:17632"/>
        <dbReference type="ChEBI" id="CHEBI:57540"/>
        <dbReference type="ChEBI" id="CHEBI:57945"/>
        <dbReference type="EC" id="1.14.12.17"/>
    </reaction>
</comment>
<comment type="cofactor">
    <cofactor evidence="1">
        <name>heme b</name>
        <dbReference type="ChEBI" id="CHEBI:60344"/>
    </cofactor>
    <text evidence="1">Binds 1 heme b (iron(II)-protoporphyrin IX) group per subunit.</text>
</comment>
<comment type="cofactor">
    <cofactor evidence="1">
        <name>FAD</name>
        <dbReference type="ChEBI" id="CHEBI:57692"/>
    </cofactor>
    <text evidence="1">Binds 1 FAD per subunit.</text>
</comment>
<comment type="domain">
    <text>Consists of two distinct domains; an N-terminal heme-containing oxygen-binding domain and a C-terminal reductase domain with binding sites for FAD and NAD(P)H.</text>
</comment>
<comment type="similarity">
    <text evidence="1">Belongs to the globin family. Two-domain flavohemoproteins subfamily.</text>
</comment>
<comment type="similarity">
    <text evidence="1">In the C-terminal section; belongs to the flavoprotein pyridine nucleotide cytochrome reductase family.</text>
</comment>
<gene>
    <name evidence="1" type="primary">hmp</name>
    <name type="synonym">fhb</name>
    <name type="ordered locus">RA0649</name>
    <name type="ORF">SMa1191</name>
</gene>
<accession>Q7WUM8</accession>
<accession>Q92Z48</accession>
<dbReference type="EC" id="1.14.12.17" evidence="1"/>
<dbReference type="EMBL" id="AY328026">
    <property type="protein sequence ID" value="AAP93662.1"/>
    <property type="molecule type" value="Genomic_DNA"/>
</dbReference>
<dbReference type="EMBL" id="AE006469">
    <property type="protein sequence ID" value="AAK65307.1"/>
    <property type="molecule type" value="Genomic_DNA"/>
</dbReference>
<dbReference type="PIR" id="A95343">
    <property type="entry name" value="A95343"/>
</dbReference>
<dbReference type="RefSeq" id="NP_435895.1">
    <property type="nucleotide sequence ID" value="NC_003037.1"/>
</dbReference>
<dbReference type="SMR" id="Q7WUM8"/>
<dbReference type="EnsemblBacteria" id="AAK65307">
    <property type="protein sequence ID" value="AAK65307"/>
    <property type="gene ID" value="SMa1191"/>
</dbReference>
<dbReference type="KEGG" id="sme:SMa1191"/>
<dbReference type="PATRIC" id="fig|266834.11.peg.669"/>
<dbReference type="HOGENOM" id="CLU_003827_12_0_5"/>
<dbReference type="OrthoDB" id="9786134at2"/>
<dbReference type="Proteomes" id="UP000001976">
    <property type="component" value="Plasmid pSymA"/>
</dbReference>
<dbReference type="GO" id="GO:0071949">
    <property type="term" value="F:FAD binding"/>
    <property type="evidence" value="ECO:0007669"/>
    <property type="project" value="InterPro"/>
</dbReference>
<dbReference type="GO" id="GO:0020037">
    <property type="term" value="F:heme binding"/>
    <property type="evidence" value="ECO:0007669"/>
    <property type="project" value="InterPro"/>
</dbReference>
<dbReference type="GO" id="GO:0046872">
    <property type="term" value="F:metal ion binding"/>
    <property type="evidence" value="ECO:0007669"/>
    <property type="project" value="UniProtKB-KW"/>
</dbReference>
<dbReference type="GO" id="GO:0008941">
    <property type="term" value="F:nitric oxide dioxygenase NAD(P)H activity"/>
    <property type="evidence" value="ECO:0007669"/>
    <property type="project" value="UniProtKB-UniRule"/>
</dbReference>
<dbReference type="GO" id="GO:0019825">
    <property type="term" value="F:oxygen binding"/>
    <property type="evidence" value="ECO:0007669"/>
    <property type="project" value="InterPro"/>
</dbReference>
<dbReference type="GO" id="GO:0005344">
    <property type="term" value="F:oxygen carrier activity"/>
    <property type="evidence" value="ECO:0007669"/>
    <property type="project" value="UniProtKB-UniRule"/>
</dbReference>
<dbReference type="GO" id="GO:0071500">
    <property type="term" value="P:cellular response to nitrosative stress"/>
    <property type="evidence" value="ECO:0007669"/>
    <property type="project" value="TreeGrafter"/>
</dbReference>
<dbReference type="GO" id="GO:0046210">
    <property type="term" value="P:nitric oxide catabolic process"/>
    <property type="evidence" value="ECO:0007669"/>
    <property type="project" value="TreeGrafter"/>
</dbReference>
<dbReference type="GO" id="GO:0009636">
    <property type="term" value="P:response to toxic substance"/>
    <property type="evidence" value="ECO:0007669"/>
    <property type="project" value="UniProtKB-KW"/>
</dbReference>
<dbReference type="CDD" id="cd14779">
    <property type="entry name" value="FHP_Ae-globin-like"/>
    <property type="match status" value="1"/>
</dbReference>
<dbReference type="CDD" id="cd06184">
    <property type="entry name" value="flavohem_like_fad_nad_binding"/>
    <property type="match status" value="1"/>
</dbReference>
<dbReference type="FunFam" id="1.10.490.10:FF:000003">
    <property type="entry name" value="Flavohemoprotein"/>
    <property type="match status" value="1"/>
</dbReference>
<dbReference type="FunFam" id="2.40.30.10:FF:000034">
    <property type="entry name" value="Flavohemoprotein"/>
    <property type="match status" value="1"/>
</dbReference>
<dbReference type="FunFam" id="3.40.50.80:FF:000010">
    <property type="entry name" value="Flavohemoprotein"/>
    <property type="match status" value="1"/>
</dbReference>
<dbReference type="Gene3D" id="1.10.490.10">
    <property type="entry name" value="Globins"/>
    <property type="match status" value="1"/>
</dbReference>
<dbReference type="Gene3D" id="3.40.50.80">
    <property type="entry name" value="Nucleotide-binding domain of ferredoxin-NADP reductase (FNR) module"/>
    <property type="match status" value="1"/>
</dbReference>
<dbReference type="Gene3D" id="2.40.30.10">
    <property type="entry name" value="Translation factors"/>
    <property type="match status" value="1"/>
</dbReference>
<dbReference type="HAMAP" id="MF_01252">
    <property type="entry name" value="Hmp"/>
    <property type="match status" value="1"/>
</dbReference>
<dbReference type="InterPro" id="IPR008333">
    <property type="entry name" value="Cbr1-like_FAD-bd_dom"/>
</dbReference>
<dbReference type="InterPro" id="IPR017927">
    <property type="entry name" value="FAD-bd_FR_type"/>
</dbReference>
<dbReference type="InterPro" id="IPR001709">
    <property type="entry name" value="Flavoprot_Pyr_Nucl_cyt_Rdtase"/>
</dbReference>
<dbReference type="InterPro" id="IPR039261">
    <property type="entry name" value="FNR_nucleotide-bd"/>
</dbReference>
<dbReference type="InterPro" id="IPR000971">
    <property type="entry name" value="Globin"/>
</dbReference>
<dbReference type="InterPro" id="IPR009050">
    <property type="entry name" value="Globin-like_sf"/>
</dbReference>
<dbReference type="InterPro" id="IPR012292">
    <property type="entry name" value="Globin/Proto"/>
</dbReference>
<dbReference type="InterPro" id="IPR023950">
    <property type="entry name" value="Hmp"/>
</dbReference>
<dbReference type="InterPro" id="IPR001433">
    <property type="entry name" value="OxRdtase_FAD/NAD-bd"/>
</dbReference>
<dbReference type="InterPro" id="IPR017938">
    <property type="entry name" value="Riboflavin_synthase-like_b-brl"/>
</dbReference>
<dbReference type="NCBIfam" id="NF009805">
    <property type="entry name" value="PRK13289.1"/>
    <property type="match status" value="1"/>
</dbReference>
<dbReference type="PANTHER" id="PTHR43396">
    <property type="entry name" value="FLAVOHEMOPROTEIN"/>
    <property type="match status" value="1"/>
</dbReference>
<dbReference type="PANTHER" id="PTHR43396:SF3">
    <property type="entry name" value="FLAVOHEMOPROTEIN"/>
    <property type="match status" value="1"/>
</dbReference>
<dbReference type="Pfam" id="PF00970">
    <property type="entry name" value="FAD_binding_6"/>
    <property type="match status" value="1"/>
</dbReference>
<dbReference type="Pfam" id="PF00042">
    <property type="entry name" value="Globin"/>
    <property type="match status" value="1"/>
</dbReference>
<dbReference type="Pfam" id="PF00175">
    <property type="entry name" value="NAD_binding_1"/>
    <property type="match status" value="1"/>
</dbReference>
<dbReference type="PRINTS" id="PR00371">
    <property type="entry name" value="FPNCR"/>
</dbReference>
<dbReference type="PRINTS" id="PR00410">
    <property type="entry name" value="PHEHYDRXLASE"/>
</dbReference>
<dbReference type="SUPFAM" id="SSF52343">
    <property type="entry name" value="Ferredoxin reductase-like, C-terminal NADP-linked domain"/>
    <property type="match status" value="1"/>
</dbReference>
<dbReference type="SUPFAM" id="SSF46458">
    <property type="entry name" value="Globin-like"/>
    <property type="match status" value="1"/>
</dbReference>
<dbReference type="SUPFAM" id="SSF63380">
    <property type="entry name" value="Riboflavin synthase domain-like"/>
    <property type="match status" value="1"/>
</dbReference>
<dbReference type="PROSITE" id="PS51384">
    <property type="entry name" value="FAD_FR"/>
    <property type="match status" value="1"/>
</dbReference>
<dbReference type="PROSITE" id="PS01033">
    <property type="entry name" value="GLOBIN"/>
    <property type="match status" value="1"/>
</dbReference>
<evidence type="ECO:0000255" key="1">
    <source>
        <dbReference type="HAMAP-Rule" id="MF_01252"/>
    </source>
</evidence>
<evidence type="ECO:0000255" key="2">
    <source>
        <dbReference type="PROSITE-ProRule" id="PRU00238"/>
    </source>
</evidence>
<evidence type="ECO:0000305" key="3"/>
<name>HMP_RHIME</name>
<sequence length="403" mass="44775">MLTQKTKDIVKATAPVLAQHGYAIIQHFYKRMFQAHPELKNIFNMAHQERGEQQQALARAVYAYAANIENPESLSAVLKDIAHKHASLGVRPEQYPIVGEHLLASIKEVLGDAATDEIISAWAQAYGNLADILAGMESELYERSEERAGGWAGWRRFIVREKNPESDVITSFVLEPADGGPVADFEPGQYTSVAVQVPKLGYQQIRQYSLSDSPNGRSYRISVKREDGGLGTPGYVSSLLHDEINVGDELKLAAPYGNFYIDVSATTPIVLISGGVGLTPMVSMLKKALQTPPRKVVFVHGARNSAVHAMRDRLKEASRTYPDFKLFIFYDEPLPTDIEGRDYDFAGLVDVEKVKDSILLDDADYYICGPVPFMRMQHDKLLGLGITEARIHYEVFGPDLFAE</sequence>